<comment type="function">
    <text evidence="1">Part of a sulfur-relay system required for 2-thiolation of 5-methylaminomethyl-2-thiouridine (mnm(5)s(2)U) at tRNA wobble positions.</text>
</comment>
<comment type="subunit">
    <text evidence="1">Heterohexamer, formed by a dimer of trimers. The hexameric TusBCD complex contains 2 copies each of TusB, TusC and TusD. The TusBCD complex interacts with TusE.</text>
</comment>
<comment type="subcellular location">
    <subcellularLocation>
        <location evidence="1">Cytoplasm</location>
    </subcellularLocation>
</comment>
<comment type="similarity">
    <text evidence="1">Belongs to the DsrF/TusC family.</text>
</comment>
<accession>Q8ZLL8</accession>
<name>TUSC_SALTY</name>
<protein>
    <recommendedName>
        <fullName evidence="1">Protein TusC</fullName>
    </recommendedName>
    <alternativeName>
        <fullName evidence="1">tRNA 2-thiouridine synthesizing protein C</fullName>
    </alternativeName>
</protein>
<sequence>MKRIAFVFSTAPHGSASGREGLDALLATSALTEALGVFFISDGVFQLLPGQKPDAVLARDYIATFKLFDLYDIDQCWICAASLRERGLENINFVVDATPLEPVALRRELGNYDVILRF</sequence>
<gene>
    <name evidence="1" type="primary">tusC</name>
    <name type="ordered locus">STM3450</name>
</gene>
<evidence type="ECO:0000255" key="1">
    <source>
        <dbReference type="HAMAP-Rule" id="MF_00389"/>
    </source>
</evidence>
<organism>
    <name type="scientific">Salmonella typhimurium (strain LT2 / SGSC1412 / ATCC 700720)</name>
    <dbReference type="NCBI Taxonomy" id="99287"/>
    <lineage>
        <taxon>Bacteria</taxon>
        <taxon>Pseudomonadati</taxon>
        <taxon>Pseudomonadota</taxon>
        <taxon>Gammaproteobacteria</taxon>
        <taxon>Enterobacterales</taxon>
        <taxon>Enterobacteriaceae</taxon>
        <taxon>Salmonella</taxon>
    </lineage>
</organism>
<dbReference type="EMBL" id="AE006468">
    <property type="protein sequence ID" value="AAL22313.1"/>
    <property type="molecule type" value="Genomic_DNA"/>
</dbReference>
<dbReference type="RefSeq" id="WP_000820704.1">
    <property type="nucleotide sequence ID" value="NC_003197.2"/>
</dbReference>
<dbReference type="SMR" id="Q8ZLL8"/>
<dbReference type="STRING" id="99287.STM3450"/>
<dbReference type="PaxDb" id="99287-STM3450"/>
<dbReference type="KEGG" id="stm:STM3450"/>
<dbReference type="PATRIC" id="fig|99287.12.peg.3647"/>
<dbReference type="HOGENOM" id="CLU_155943_1_0_6"/>
<dbReference type="OMA" id="EMILIMA"/>
<dbReference type="PhylomeDB" id="Q8ZLL8"/>
<dbReference type="BioCyc" id="SENT99287:STM3450-MONOMER"/>
<dbReference type="Proteomes" id="UP000001014">
    <property type="component" value="Chromosome"/>
</dbReference>
<dbReference type="GO" id="GO:0005737">
    <property type="term" value="C:cytoplasm"/>
    <property type="evidence" value="ECO:0007669"/>
    <property type="project" value="UniProtKB-SubCell"/>
</dbReference>
<dbReference type="GO" id="GO:0008033">
    <property type="term" value="P:tRNA processing"/>
    <property type="evidence" value="ECO:0007669"/>
    <property type="project" value="UniProtKB-UniRule"/>
</dbReference>
<dbReference type="Gene3D" id="3.40.1260.10">
    <property type="entry name" value="DsrEFH-like"/>
    <property type="match status" value="1"/>
</dbReference>
<dbReference type="HAMAP" id="MF_00389">
    <property type="entry name" value="Thiourid_synth_C"/>
    <property type="match status" value="1"/>
</dbReference>
<dbReference type="InterPro" id="IPR027396">
    <property type="entry name" value="DsrEFH-like"/>
</dbReference>
<dbReference type="InterPro" id="IPR003787">
    <property type="entry name" value="Sulphur_relay_DsrE/F-like"/>
</dbReference>
<dbReference type="InterPro" id="IPR037450">
    <property type="entry name" value="Sulphur_relay_TusC"/>
</dbReference>
<dbReference type="InterPro" id="IPR017462">
    <property type="entry name" value="Sulphur_relay_TusC/DsrF"/>
</dbReference>
<dbReference type="NCBIfam" id="NF001238">
    <property type="entry name" value="PRK00211.1"/>
    <property type="match status" value="1"/>
</dbReference>
<dbReference type="NCBIfam" id="TIGR03010">
    <property type="entry name" value="sulf_tusC_dsrF"/>
    <property type="match status" value="1"/>
</dbReference>
<dbReference type="PANTHER" id="PTHR38780">
    <property type="entry name" value="PROTEIN TUSC"/>
    <property type="match status" value="1"/>
</dbReference>
<dbReference type="PANTHER" id="PTHR38780:SF1">
    <property type="entry name" value="PROTEIN TUSC"/>
    <property type="match status" value="1"/>
</dbReference>
<dbReference type="Pfam" id="PF02635">
    <property type="entry name" value="DsrE"/>
    <property type="match status" value="1"/>
</dbReference>
<dbReference type="SUPFAM" id="SSF75169">
    <property type="entry name" value="DsrEFH-like"/>
    <property type="match status" value="1"/>
</dbReference>
<keyword id="KW-0963">Cytoplasm</keyword>
<keyword id="KW-1185">Reference proteome</keyword>
<keyword id="KW-0819">tRNA processing</keyword>
<proteinExistence type="inferred from homology"/>
<feature type="chain" id="PRO_0000214890" description="Protein TusC">
    <location>
        <begin position="1"/>
        <end position="118"/>
    </location>
</feature>
<reference key="1">
    <citation type="journal article" date="2001" name="Nature">
        <title>Complete genome sequence of Salmonella enterica serovar Typhimurium LT2.</title>
        <authorList>
            <person name="McClelland M."/>
            <person name="Sanderson K.E."/>
            <person name="Spieth J."/>
            <person name="Clifton S.W."/>
            <person name="Latreille P."/>
            <person name="Courtney L."/>
            <person name="Porwollik S."/>
            <person name="Ali J."/>
            <person name="Dante M."/>
            <person name="Du F."/>
            <person name="Hou S."/>
            <person name="Layman D."/>
            <person name="Leonard S."/>
            <person name="Nguyen C."/>
            <person name="Scott K."/>
            <person name="Holmes A."/>
            <person name="Grewal N."/>
            <person name="Mulvaney E."/>
            <person name="Ryan E."/>
            <person name="Sun H."/>
            <person name="Florea L."/>
            <person name="Miller W."/>
            <person name="Stoneking T."/>
            <person name="Nhan M."/>
            <person name="Waterston R."/>
            <person name="Wilson R.K."/>
        </authorList>
    </citation>
    <scope>NUCLEOTIDE SEQUENCE [LARGE SCALE GENOMIC DNA]</scope>
    <source>
        <strain>LT2 / SGSC1412 / ATCC 700720</strain>
    </source>
</reference>